<gene>
    <name evidence="1" type="primary">mutS</name>
    <name type="ordered locus">BT_0108</name>
</gene>
<feature type="chain" id="PRO_0000335118" description="DNA mismatch repair protein MutS">
    <location>
        <begin position="1"/>
        <end position="914"/>
    </location>
</feature>
<feature type="region of interest" description="Disordered" evidence="2">
    <location>
        <begin position="1"/>
        <end position="25"/>
    </location>
</feature>
<feature type="compositionally biased region" description="Polar residues" evidence="2">
    <location>
        <begin position="11"/>
        <end position="25"/>
    </location>
</feature>
<feature type="binding site" evidence="1">
    <location>
        <begin position="662"/>
        <end position="669"/>
    </location>
    <ligand>
        <name>ATP</name>
        <dbReference type="ChEBI" id="CHEBI:30616"/>
    </ligand>
</feature>
<comment type="function">
    <text evidence="1">This protein is involved in the repair of mismatches in DNA. It is possible that it carries out the mismatch recognition step. This protein has a weak ATPase activity.</text>
</comment>
<comment type="similarity">
    <text evidence="1">Belongs to the DNA mismatch repair MutS family.</text>
</comment>
<organism>
    <name type="scientific">Bartonella tribocorum (strain CIP 105476 / IBS 506)</name>
    <dbReference type="NCBI Taxonomy" id="382640"/>
    <lineage>
        <taxon>Bacteria</taxon>
        <taxon>Pseudomonadati</taxon>
        <taxon>Pseudomonadota</taxon>
        <taxon>Alphaproteobacteria</taxon>
        <taxon>Hyphomicrobiales</taxon>
        <taxon>Bartonellaceae</taxon>
        <taxon>Bartonella</taxon>
    </lineage>
</organism>
<dbReference type="EMBL" id="AM260525">
    <property type="protein sequence ID" value="CAK00598.1"/>
    <property type="molecule type" value="Genomic_DNA"/>
</dbReference>
<dbReference type="RefSeq" id="WP_012230428.1">
    <property type="nucleotide sequence ID" value="NC_010161.1"/>
</dbReference>
<dbReference type="SMR" id="A9ILT1"/>
<dbReference type="KEGG" id="btr:BT_0108"/>
<dbReference type="eggNOG" id="COG0249">
    <property type="taxonomic scope" value="Bacteria"/>
</dbReference>
<dbReference type="HOGENOM" id="CLU_002472_4_0_5"/>
<dbReference type="Proteomes" id="UP000001592">
    <property type="component" value="Chromosome"/>
</dbReference>
<dbReference type="GO" id="GO:0005829">
    <property type="term" value="C:cytosol"/>
    <property type="evidence" value="ECO:0007669"/>
    <property type="project" value="TreeGrafter"/>
</dbReference>
<dbReference type="GO" id="GO:0005524">
    <property type="term" value="F:ATP binding"/>
    <property type="evidence" value="ECO:0007669"/>
    <property type="project" value="UniProtKB-UniRule"/>
</dbReference>
<dbReference type="GO" id="GO:0140664">
    <property type="term" value="F:ATP-dependent DNA damage sensor activity"/>
    <property type="evidence" value="ECO:0007669"/>
    <property type="project" value="InterPro"/>
</dbReference>
<dbReference type="GO" id="GO:0003684">
    <property type="term" value="F:damaged DNA binding"/>
    <property type="evidence" value="ECO:0007669"/>
    <property type="project" value="UniProtKB-UniRule"/>
</dbReference>
<dbReference type="GO" id="GO:0030983">
    <property type="term" value="F:mismatched DNA binding"/>
    <property type="evidence" value="ECO:0007669"/>
    <property type="project" value="InterPro"/>
</dbReference>
<dbReference type="GO" id="GO:0006298">
    <property type="term" value="P:mismatch repair"/>
    <property type="evidence" value="ECO:0007669"/>
    <property type="project" value="UniProtKB-UniRule"/>
</dbReference>
<dbReference type="CDD" id="cd03284">
    <property type="entry name" value="ABC_MutS1"/>
    <property type="match status" value="1"/>
</dbReference>
<dbReference type="FunFam" id="3.40.1170.10:FF:000001">
    <property type="entry name" value="DNA mismatch repair protein MutS"/>
    <property type="match status" value="1"/>
</dbReference>
<dbReference type="FunFam" id="3.40.50.300:FF:000870">
    <property type="entry name" value="MutS protein homolog 4"/>
    <property type="match status" value="1"/>
</dbReference>
<dbReference type="Gene3D" id="1.10.1420.10">
    <property type="match status" value="2"/>
</dbReference>
<dbReference type="Gene3D" id="6.10.140.430">
    <property type="match status" value="1"/>
</dbReference>
<dbReference type="Gene3D" id="3.40.1170.10">
    <property type="entry name" value="DNA repair protein MutS, domain I"/>
    <property type="match status" value="1"/>
</dbReference>
<dbReference type="Gene3D" id="3.30.420.110">
    <property type="entry name" value="MutS, connector domain"/>
    <property type="match status" value="1"/>
</dbReference>
<dbReference type="Gene3D" id="3.40.50.300">
    <property type="entry name" value="P-loop containing nucleotide triphosphate hydrolases"/>
    <property type="match status" value="1"/>
</dbReference>
<dbReference type="HAMAP" id="MF_00096">
    <property type="entry name" value="MutS"/>
    <property type="match status" value="1"/>
</dbReference>
<dbReference type="InterPro" id="IPR005748">
    <property type="entry name" value="DNA_mismatch_repair_MutS"/>
</dbReference>
<dbReference type="InterPro" id="IPR007695">
    <property type="entry name" value="DNA_mismatch_repair_MutS-lik_N"/>
</dbReference>
<dbReference type="InterPro" id="IPR017261">
    <property type="entry name" value="DNA_mismatch_repair_MutS/MSH"/>
</dbReference>
<dbReference type="InterPro" id="IPR000432">
    <property type="entry name" value="DNA_mismatch_repair_MutS_C"/>
</dbReference>
<dbReference type="InterPro" id="IPR007861">
    <property type="entry name" value="DNA_mismatch_repair_MutS_clamp"/>
</dbReference>
<dbReference type="InterPro" id="IPR007696">
    <property type="entry name" value="DNA_mismatch_repair_MutS_core"/>
</dbReference>
<dbReference type="InterPro" id="IPR016151">
    <property type="entry name" value="DNA_mismatch_repair_MutS_N"/>
</dbReference>
<dbReference type="InterPro" id="IPR036187">
    <property type="entry name" value="DNA_mismatch_repair_MutS_sf"/>
</dbReference>
<dbReference type="InterPro" id="IPR007860">
    <property type="entry name" value="DNA_mmatch_repair_MutS_con_dom"/>
</dbReference>
<dbReference type="InterPro" id="IPR045076">
    <property type="entry name" value="MutS"/>
</dbReference>
<dbReference type="InterPro" id="IPR036678">
    <property type="entry name" value="MutS_con_dom_sf"/>
</dbReference>
<dbReference type="InterPro" id="IPR027417">
    <property type="entry name" value="P-loop_NTPase"/>
</dbReference>
<dbReference type="NCBIfam" id="TIGR01070">
    <property type="entry name" value="mutS1"/>
    <property type="match status" value="1"/>
</dbReference>
<dbReference type="NCBIfam" id="NF003810">
    <property type="entry name" value="PRK05399.1"/>
    <property type="match status" value="1"/>
</dbReference>
<dbReference type="PANTHER" id="PTHR11361:SF34">
    <property type="entry name" value="DNA MISMATCH REPAIR PROTEIN MSH1, MITOCHONDRIAL"/>
    <property type="match status" value="1"/>
</dbReference>
<dbReference type="PANTHER" id="PTHR11361">
    <property type="entry name" value="DNA MISMATCH REPAIR PROTEIN MUTS FAMILY MEMBER"/>
    <property type="match status" value="1"/>
</dbReference>
<dbReference type="Pfam" id="PF01624">
    <property type="entry name" value="MutS_I"/>
    <property type="match status" value="1"/>
</dbReference>
<dbReference type="Pfam" id="PF05188">
    <property type="entry name" value="MutS_II"/>
    <property type="match status" value="1"/>
</dbReference>
<dbReference type="Pfam" id="PF05192">
    <property type="entry name" value="MutS_III"/>
    <property type="match status" value="1"/>
</dbReference>
<dbReference type="Pfam" id="PF05190">
    <property type="entry name" value="MutS_IV"/>
    <property type="match status" value="1"/>
</dbReference>
<dbReference type="Pfam" id="PF00488">
    <property type="entry name" value="MutS_V"/>
    <property type="match status" value="1"/>
</dbReference>
<dbReference type="PIRSF" id="PIRSF037677">
    <property type="entry name" value="DNA_mis_repair_Msh6"/>
    <property type="match status" value="1"/>
</dbReference>
<dbReference type="SMART" id="SM00534">
    <property type="entry name" value="MUTSac"/>
    <property type="match status" value="1"/>
</dbReference>
<dbReference type="SMART" id="SM00533">
    <property type="entry name" value="MUTSd"/>
    <property type="match status" value="1"/>
</dbReference>
<dbReference type="SUPFAM" id="SSF55271">
    <property type="entry name" value="DNA repair protein MutS, domain I"/>
    <property type="match status" value="1"/>
</dbReference>
<dbReference type="SUPFAM" id="SSF53150">
    <property type="entry name" value="DNA repair protein MutS, domain II"/>
    <property type="match status" value="1"/>
</dbReference>
<dbReference type="SUPFAM" id="SSF48334">
    <property type="entry name" value="DNA repair protein MutS, domain III"/>
    <property type="match status" value="1"/>
</dbReference>
<dbReference type="SUPFAM" id="SSF52540">
    <property type="entry name" value="P-loop containing nucleoside triphosphate hydrolases"/>
    <property type="match status" value="1"/>
</dbReference>
<dbReference type="PROSITE" id="PS00486">
    <property type="entry name" value="DNA_MISMATCH_REPAIR_2"/>
    <property type="match status" value="1"/>
</dbReference>
<sequence>MDKKNDHKNNLIPQPASSFASSQERPTPMMEQYIEIKAVHHDSLLFYRMGDFYELFFNDAIEAAQALGITLTARGKHLGQDIPMCGVPVHAADDYLQKLIACGYRVAVCEQTEDPAEAKKRGSKSVVRRDVVRLVTPGTITEEKLLDPTRANYLMTLSRIKTSDGEDFALSWIDISTGIFRVTESRQEKLLADIMRVDPQEIIVADAFFHDKSHKSLFNVLDHIVSPQPACLFDTLTAERDICTYFKLSTLEGVADYSRCELSAIVAAIRYIEKTQITHRPPLMQPERQNESATLFIDAATRLSLELIRTTSGQRDGSLLKAIDRTVTGGGSRLLIDRLIAPLTTPSAIDTRLDSIDFFLRNPSLAEAIKLVLKGGPDMPRAVSRLALGRGGPRDMATIQRGFEIIRELNQILNNELLPQEISDVQQIFSNLPVSLHCHLEQALADDLPLLKRDGGFIRSNYHKELDEMRALRDESRRVIAELQAQYAQETDIKTLKIKHNNILGYFIEITSTQASGLTNNPQAKARFIHRQTMANAMRFTTTELADLESRIAHAANHALTLELEIFDTLVQEIIEQVEFIRKAAEALAILDVSVALAYLAEEQGYCRPKIDHSLTFHITAGRHPVVEQALRKQAAEPFVANDCDLSVQENQQYAAIWLLTGPNMGGKSTFLRQNALIAIMAQMGSFVPATSAHIGVVDRLFSRVGASDDLARGRSTFMMEMVETATILNHASHHSLVILDEIGRGTSTFDGLSIAWAAVEYLHEVNHCRAILATHFHEMTALTEKLDRLHNVTMKVKNWDGDVVFLHEVTPGAADRSYGVQVAKLAGLPPAVITRATDVLHQLEQGEMAGKGHKLIDDLPLFSLKATSSLNEEKNKHDALHEALKNIHPDELSPKQALEAIYHLKQLEKNNGL</sequence>
<evidence type="ECO:0000255" key="1">
    <source>
        <dbReference type="HAMAP-Rule" id="MF_00096"/>
    </source>
</evidence>
<evidence type="ECO:0000256" key="2">
    <source>
        <dbReference type="SAM" id="MobiDB-lite"/>
    </source>
</evidence>
<keyword id="KW-0067">ATP-binding</keyword>
<keyword id="KW-0227">DNA damage</keyword>
<keyword id="KW-0234">DNA repair</keyword>
<keyword id="KW-0238">DNA-binding</keyword>
<keyword id="KW-0547">Nucleotide-binding</keyword>
<protein>
    <recommendedName>
        <fullName evidence="1">DNA mismatch repair protein MutS</fullName>
    </recommendedName>
</protein>
<accession>A9ILT1</accession>
<name>MUTS_BART1</name>
<proteinExistence type="inferred from homology"/>
<reference key="1">
    <citation type="journal article" date="2007" name="Nat. Genet.">
        <title>Genomic analysis of Bartonella identifies type IV secretion systems as host adaptability factors.</title>
        <authorList>
            <person name="Saenz H.L."/>
            <person name="Engel P."/>
            <person name="Stoeckli M.C."/>
            <person name="Lanz C."/>
            <person name="Raddatz G."/>
            <person name="Vayssier-Taussat M."/>
            <person name="Birtles R."/>
            <person name="Schuster S.C."/>
            <person name="Dehio C."/>
        </authorList>
    </citation>
    <scope>NUCLEOTIDE SEQUENCE [LARGE SCALE GENOMIC DNA]</scope>
    <source>
        <strain>CIP 105476 / IBS 506</strain>
    </source>
</reference>